<dbReference type="EMBL" id="CP000673">
    <property type="protein sequence ID" value="EDK32291.1"/>
    <property type="molecule type" value="Genomic_DNA"/>
</dbReference>
<dbReference type="RefSeq" id="WP_011988816.1">
    <property type="nucleotide sequence ID" value="NC_009706.1"/>
</dbReference>
<dbReference type="SMR" id="A5N4R0"/>
<dbReference type="STRING" id="431943.CKL_0237"/>
<dbReference type="KEGG" id="ckl:CKL_0237"/>
<dbReference type="eggNOG" id="COG0199">
    <property type="taxonomic scope" value="Bacteria"/>
</dbReference>
<dbReference type="HOGENOM" id="CLU_139869_3_0_9"/>
<dbReference type="Proteomes" id="UP000002411">
    <property type="component" value="Chromosome"/>
</dbReference>
<dbReference type="GO" id="GO:0005737">
    <property type="term" value="C:cytoplasm"/>
    <property type="evidence" value="ECO:0007669"/>
    <property type="project" value="UniProtKB-ARBA"/>
</dbReference>
<dbReference type="GO" id="GO:0015935">
    <property type="term" value="C:small ribosomal subunit"/>
    <property type="evidence" value="ECO:0007669"/>
    <property type="project" value="TreeGrafter"/>
</dbReference>
<dbReference type="GO" id="GO:0019843">
    <property type="term" value="F:rRNA binding"/>
    <property type="evidence" value="ECO:0007669"/>
    <property type="project" value="UniProtKB-UniRule"/>
</dbReference>
<dbReference type="GO" id="GO:0003735">
    <property type="term" value="F:structural constituent of ribosome"/>
    <property type="evidence" value="ECO:0007669"/>
    <property type="project" value="InterPro"/>
</dbReference>
<dbReference type="GO" id="GO:0008270">
    <property type="term" value="F:zinc ion binding"/>
    <property type="evidence" value="ECO:0007669"/>
    <property type="project" value="UniProtKB-UniRule"/>
</dbReference>
<dbReference type="GO" id="GO:0006412">
    <property type="term" value="P:translation"/>
    <property type="evidence" value="ECO:0007669"/>
    <property type="project" value="UniProtKB-UniRule"/>
</dbReference>
<dbReference type="FunFam" id="4.10.830.10:FF:000001">
    <property type="entry name" value="30S ribosomal protein S14 type Z"/>
    <property type="match status" value="1"/>
</dbReference>
<dbReference type="Gene3D" id="4.10.830.10">
    <property type="entry name" value="30s Ribosomal Protein S14, Chain N"/>
    <property type="match status" value="1"/>
</dbReference>
<dbReference type="HAMAP" id="MF_01364_B">
    <property type="entry name" value="Ribosomal_uS14_2_B"/>
    <property type="match status" value="1"/>
</dbReference>
<dbReference type="InterPro" id="IPR001209">
    <property type="entry name" value="Ribosomal_uS14"/>
</dbReference>
<dbReference type="InterPro" id="IPR023053">
    <property type="entry name" value="Ribosomal_uS14_bact"/>
</dbReference>
<dbReference type="InterPro" id="IPR043140">
    <property type="entry name" value="Ribosomal_uS14_sf"/>
</dbReference>
<dbReference type="NCBIfam" id="NF005974">
    <property type="entry name" value="PRK08061.1"/>
    <property type="match status" value="1"/>
</dbReference>
<dbReference type="PANTHER" id="PTHR19836">
    <property type="entry name" value="30S RIBOSOMAL PROTEIN S14"/>
    <property type="match status" value="1"/>
</dbReference>
<dbReference type="PANTHER" id="PTHR19836:SF19">
    <property type="entry name" value="SMALL RIBOSOMAL SUBUNIT PROTEIN US14M"/>
    <property type="match status" value="1"/>
</dbReference>
<dbReference type="Pfam" id="PF00253">
    <property type="entry name" value="Ribosomal_S14"/>
    <property type="match status" value="1"/>
</dbReference>
<dbReference type="SUPFAM" id="SSF57716">
    <property type="entry name" value="Glucocorticoid receptor-like (DNA-binding domain)"/>
    <property type="match status" value="1"/>
</dbReference>
<feature type="chain" id="PRO_1000087013" description="Small ribosomal subunit protein uS14">
    <location>
        <begin position="1"/>
        <end position="61"/>
    </location>
</feature>
<feature type="binding site" evidence="1">
    <location>
        <position position="24"/>
    </location>
    <ligand>
        <name>Zn(2+)</name>
        <dbReference type="ChEBI" id="CHEBI:29105"/>
    </ligand>
</feature>
<feature type="binding site" evidence="1">
    <location>
        <position position="27"/>
    </location>
    <ligand>
        <name>Zn(2+)</name>
        <dbReference type="ChEBI" id="CHEBI:29105"/>
    </ligand>
</feature>
<feature type="binding site" evidence="1">
    <location>
        <position position="40"/>
    </location>
    <ligand>
        <name>Zn(2+)</name>
        <dbReference type="ChEBI" id="CHEBI:29105"/>
    </ligand>
</feature>
<feature type="binding site" evidence="1">
    <location>
        <position position="43"/>
    </location>
    <ligand>
        <name>Zn(2+)</name>
        <dbReference type="ChEBI" id="CHEBI:29105"/>
    </ligand>
</feature>
<gene>
    <name evidence="1" type="primary">rpsZ</name>
    <name evidence="1" type="synonym">rpsN</name>
    <name type="ordered locus">CKL_0237</name>
</gene>
<accession>A5N4R0</accession>
<protein>
    <recommendedName>
        <fullName evidence="1">Small ribosomal subunit protein uS14</fullName>
    </recommendedName>
    <alternativeName>
        <fullName evidence="2">30S ribosomal protein S14 type Z</fullName>
    </alternativeName>
</protein>
<name>RS14Z_CLOK5</name>
<evidence type="ECO:0000255" key="1">
    <source>
        <dbReference type="HAMAP-Rule" id="MF_01364"/>
    </source>
</evidence>
<evidence type="ECO:0000305" key="2"/>
<sequence length="61" mass="7121">MARKALIEKWKKTPKYATKAYTRCRICGRPHAVLKKYGICRICFRELAYKGEIPGCKKASW</sequence>
<keyword id="KW-0479">Metal-binding</keyword>
<keyword id="KW-1185">Reference proteome</keyword>
<keyword id="KW-0687">Ribonucleoprotein</keyword>
<keyword id="KW-0689">Ribosomal protein</keyword>
<keyword id="KW-0694">RNA-binding</keyword>
<keyword id="KW-0699">rRNA-binding</keyword>
<keyword id="KW-0862">Zinc</keyword>
<comment type="function">
    <text evidence="1">Binds 16S rRNA, required for the assembly of 30S particles and may also be responsible for determining the conformation of the 16S rRNA at the A site.</text>
</comment>
<comment type="cofactor">
    <cofactor evidence="1">
        <name>Zn(2+)</name>
        <dbReference type="ChEBI" id="CHEBI:29105"/>
    </cofactor>
    <text evidence="1">Binds 1 zinc ion per subunit.</text>
</comment>
<comment type="subunit">
    <text evidence="1">Part of the 30S ribosomal subunit. Contacts proteins S3 and S10.</text>
</comment>
<comment type="similarity">
    <text evidence="1">Belongs to the universal ribosomal protein uS14 family. Zinc-binding uS14 subfamily.</text>
</comment>
<organism>
    <name type="scientific">Clostridium kluyveri (strain ATCC 8527 / DSM 555 / NBRC 12016 / NCIMB 10680 / K1)</name>
    <dbReference type="NCBI Taxonomy" id="431943"/>
    <lineage>
        <taxon>Bacteria</taxon>
        <taxon>Bacillati</taxon>
        <taxon>Bacillota</taxon>
        <taxon>Clostridia</taxon>
        <taxon>Eubacteriales</taxon>
        <taxon>Clostridiaceae</taxon>
        <taxon>Clostridium</taxon>
    </lineage>
</organism>
<proteinExistence type="inferred from homology"/>
<reference key="1">
    <citation type="journal article" date="2008" name="Proc. Natl. Acad. Sci. U.S.A.">
        <title>The genome of Clostridium kluyveri, a strict anaerobe with unique metabolic features.</title>
        <authorList>
            <person name="Seedorf H."/>
            <person name="Fricke W.F."/>
            <person name="Veith B."/>
            <person name="Brueggemann H."/>
            <person name="Liesegang H."/>
            <person name="Strittmatter A."/>
            <person name="Miethke M."/>
            <person name="Buckel W."/>
            <person name="Hinderberger J."/>
            <person name="Li F."/>
            <person name="Hagemeier C."/>
            <person name="Thauer R.K."/>
            <person name="Gottschalk G."/>
        </authorList>
    </citation>
    <scope>NUCLEOTIDE SEQUENCE [LARGE SCALE GENOMIC DNA]</scope>
    <source>
        <strain>ATCC 8527 / DSM 555 / NBRC 12016 / NCIMB 10680 / K1</strain>
    </source>
</reference>